<accession>O63912</accession>
<sequence>MMMSLFNTFESPYFLGFPLMIFIAILISLTMFIPDNNLLIKNQSSMLASTFLKTMTKEIFSPIKKSGHSWALLLMTTLMFIFLNNITGLLPYTFTVTSQLSLNMAMAIPLWLGTIIMGATSQPSHSLAHLLPEGTPMTLAPFLIVIESISIIIRPLALGVRLTANITAGHLLIHLVSLALINLTKSLPLLFLTFSVFILLLILELAVSFIQAYVFVMLVSLYLEENLI</sequence>
<feature type="chain" id="PRO_0000082141" description="ATP synthase F(0) complex subunit a">
    <location>
        <begin position="1"/>
        <end position="228"/>
    </location>
</feature>
<feature type="transmembrane region" description="Helical" evidence="2">
    <location>
        <begin position="13"/>
        <end position="33"/>
    </location>
</feature>
<feature type="transmembrane region" description="Helical" evidence="2">
    <location>
        <begin position="70"/>
        <end position="90"/>
    </location>
</feature>
<feature type="transmembrane region" description="Helical" evidence="2">
    <location>
        <begin position="100"/>
        <end position="120"/>
    </location>
</feature>
<feature type="transmembrane region" description="Helical" evidence="2">
    <location>
        <begin position="140"/>
        <end position="160"/>
    </location>
</feature>
<feature type="transmembrane region" description="Helical" evidence="2">
    <location>
        <begin position="162"/>
        <end position="182"/>
    </location>
</feature>
<feature type="transmembrane region" description="Helical" evidence="2">
    <location>
        <begin position="190"/>
        <end position="210"/>
    </location>
</feature>
<gene>
    <name evidence="1" type="primary">MT-ATP6</name>
    <name type="synonym">ATP6</name>
    <name type="synonym">ATPASE6</name>
    <name type="synonym">MTATP6</name>
</gene>
<geneLocation type="mitochondrion"/>
<organism>
    <name type="scientific">Myxine glutinosa</name>
    <name type="common">Atlantic hagfish</name>
    <dbReference type="NCBI Taxonomy" id="7769"/>
    <lineage>
        <taxon>Eukaryota</taxon>
        <taxon>Metazoa</taxon>
        <taxon>Chordata</taxon>
        <taxon>Craniata</taxon>
        <taxon>Vertebrata</taxon>
        <taxon>Cyclostomata</taxon>
        <taxon>Myxini</taxon>
        <taxon>Myxiniformes</taxon>
        <taxon>Myxinidae</taxon>
        <taxon>Myxininae</taxon>
        <taxon>Myxine</taxon>
    </lineage>
</organism>
<reference key="1">
    <citation type="journal article" date="1998" name="J. Mol. Evol.">
        <title>The mitochondrial DNA molecule of the hagfish (Myxine glutinosa) and vertebrate phylogeny.</title>
        <authorList>
            <person name="Rasmussen A.S."/>
            <person name="Janke A."/>
            <person name="Arnason U."/>
        </authorList>
    </citation>
    <scope>NUCLEOTIDE SEQUENCE [GENOMIC DNA]</scope>
</reference>
<reference key="2">
    <citation type="journal article" date="2001" name="J. Mol. Evol.">
        <title>The complete mitochondrial genome of the hagfish Myxine glutinosa: unique features of the control region.</title>
        <authorList>
            <person name="Delarbre C."/>
            <person name="Rasmussen A.S."/>
            <person name="Arnason U."/>
            <person name="Gachelin G."/>
        </authorList>
    </citation>
    <scope>NUCLEOTIDE SEQUENCE [GENOMIC DNA]</scope>
</reference>
<protein>
    <recommendedName>
        <fullName evidence="1">ATP synthase F(0) complex subunit a</fullName>
    </recommendedName>
    <alternativeName>
        <fullName>F-ATPase protein 6</fullName>
    </alternativeName>
    <alternativeName>
        <fullName evidence="1">Proton-conducting channel, ATP synthase F(0) complex subunit a</fullName>
    </alternativeName>
</protein>
<proteinExistence type="inferred from homology"/>
<keyword id="KW-0066">ATP synthesis</keyword>
<keyword id="KW-0138">CF(0)</keyword>
<keyword id="KW-0375">Hydrogen ion transport</keyword>
<keyword id="KW-0406">Ion transport</keyword>
<keyword id="KW-0472">Membrane</keyword>
<keyword id="KW-0496">Mitochondrion</keyword>
<keyword id="KW-0999">Mitochondrion inner membrane</keyword>
<keyword id="KW-0812">Transmembrane</keyword>
<keyword id="KW-1133">Transmembrane helix</keyword>
<keyword id="KW-0813">Transport</keyword>
<evidence type="ECO:0000250" key="1">
    <source>
        <dbReference type="UniProtKB" id="P00846"/>
    </source>
</evidence>
<evidence type="ECO:0000255" key="2"/>
<evidence type="ECO:0000305" key="3"/>
<dbReference type="EMBL" id="Y15180">
    <property type="protein sequence ID" value="CAA75479.1"/>
    <property type="molecule type" value="Genomic_DNA"/>
</dbReference>
<dbReference type="EMBL" id="AJ404477">
    <property type="protein sequence ID" value="CAC20654.1"/>
    <property type="molecule type" value="Genomic_DNA"/>
</dbReference>
<dbReference type="RefSeq" id="NP_073278.1">
    <property type="nucleotide sequence ID" value="NC_002639.1"/>
</dbReference>
<dbReference type="SMR" id="O63912"/>
<dbReference type="GeneID" id="802341"/>
<dbReference type="CTD" id="4508"/>
<dbReference type="GO" id="GO:0005743">
    <property type="term" value="C:mitochondrial inner membrane"/>
    <property type="evidence" value="ECO:0007669"/>
    <property type="project" value="UniProtKB-SubCell"/>
</dbReference>
<dbReference type="GO" id="GO:0045259">
    <property type="term" value="C:proton-transporting ATP synthase complex"/>
    <property type="evidence" value="ECO:0000250"/>
    <property type="project" value="UniProtKB"/>
</dbReference>
<dbReference type="GO" id="GO:0015252">
    <property type="term" value="F:proton channel activity"/>
    <property type="evidence" value="ECO:0000250"/>
    <property type="project" value="UniProtKB"/>
</dbReference>
<dbReference type="GO" id="GO:0046933">
    <property type="term" value="F:proton-transporting ATP synthase activity, rotational mechanism"/>
    <property type="evidence" value="ECO:0007669"/>
    <property type="project" value="TreeGrafter"/>
</dbReference>
<dbReference type="GO" id="GO:0015986">
    <property type="term" value="P:proton motive force-driven ATP synthesis"/>
    <property type="evidence" value="ECO:0000250"/>
    <property type="project" value="UniProtKB"/>
</dbReference>
<dbReference type="GO" id="GO:1902600">
    <property type="term" value="P:proton transmembrane transport"/>
    <property type="evidence" value="ECO:0000250"/>
    <property type="project" value="UniProtKB"/>
</dbReference>
<dbReference type="CDD" id="cd00310">
    <property type="entry name" value="ATP-synt_Fo_a_6"/>
    <property type="match status" value="1"/>
</dbReference>
<dbReference type="Gene3D" id="1.20.120.220">
    <property type="entry name" value="ATP synthase, F0 complex, subunit A"/>
    <property type="match status" value="1"/>
</dbReference>
<dbReference type="InterPro" id="IPR000568">
    <property type="entry name" value="ATP_synth_F0_asu"/>
</dbReference>
<dbReference type="InterPro" id="IPR023011">
    <property type="entry name" value="ATP_synth_F0_asu_AS"/>
</dbReference>
<dbReference type="InterPro" id="IPR045083">
    <property type="entry name" value="ATP_synth_F0_asu_bact/mt"/>
</dbReference>
<dbReference type="InterPro" id="IPR035908">
    <property type="entry name" value="F0_ATP_A_sf"/>
</dbReference>
<dbReference type="NCBIfam" id="TIGR01131">
    <property type="entry name" value="ATP_synt_6_or_A"/>
    <property type="match status" value="1"/>
</dbReference>
<dbReference type="PANTHER" id="PTHR11410">
    <property type="entry name" value="ATP SYNTHASE SUBUNIT A"/>
    <property type="match status" value="1"/>
</dbReference>
<dbReference type="PANTHER" id="PTHR11410:SF0">
    <property type="entry name" value="ATP SYNTHASE SUBUNIT A"/>
    <property type="match status" value="1"/>
</dbReference>
<dbReference type="Pfam" id="PF00119">
    <property type="entry name" value="ATP-synt_A"/>
    <property type="match status" value="1"/>
</dbReference>
<dbReference type="PRINTS" id="PR00123">
    <property type="entry name" value="ATPASEA"/>
</dbReference>
<dbReference type="SUPFAM" id="SSF81336">
    <property type="entry name" value="F1F0 ATP synthase subunit A"/>
    <property type="match status" value="1"/>
</dbReference>
<dbReference type="PROSITE" id="PS00449">
    <property type="entry name" value="ATPASE_A"/>
    <property type="match status" value="1"/>
</dbReference>
<comment type="function">
    <text evidence="1">Subunit a, of the mitochondrial membrane ATP synthase complex (F(1)F(0) ATP synthase or Complex V) that produces ATP from ADP in the presence of a proton gradient across the membrane which is generated by electron transport complexes of the respiratory chain. ATP synthase complex consist of a soluble F(1) head domain - the catalytic core - and a membrane F(1) domain - the membrane proton channel. These two domains are linked by a central stalk rotating inside the F(1) region and a stationary peripheral stalk. During catalysis, ATP synthesis in the catalytic domain of F(1) is coupled via a rotary mechanism of the central stalk subunits to proton translocation. With the subunit c (ATP5MC1), forms the proton-conducting channel in the F(0) domain, that contains two crucial half-channels (inlet and outlet) that facilitate proton movement from the mitochondrial intermembrane space (IMS) into the matrix. Protons are taken up via the inlet half-channel and released through the outlet half-channel, following a Grotthuss mechanism.</text>
</comment>
<comment type="catalytic activity">
    <reaction evidence="1">
        <text>H(+)(in) = H(+)(out)</text>
        <dbReference type="Rhea" id="RHEA:34979"/>
        <dbReference type="ChEBI" id="CHEBI:15378"/>
    </reaction>
</comment>
<comment type="subunit">
    <text evidence="1">Component of the ATP synthase complex composed at least of ATP5F1A/subunit alpha, ATP5F1B/subunit beta, ATP5MC1/subunit c (homooctomer), MT-ATP6/subunit a, MT-ATP8/subunit 8, ATP5ME/subunit e, ATP5MF/subunit f, ATP5MG/subunit g, ATP5MK/subunit k, ATP5MJ/subunit j, ATP5F1C/subunit gamma, ATP5F1D/subunit delta, ATP5F1E/subunit epsilon, ATP5PF/subunit F6, ATP5PB/subunit b, ATP5PD/subunit d, ATP5PO/subunit OSCP. ATP synthase complex consists of a soluble F(1) head domain (subunits alpha(3) and beta(3)) - the catalytic core - and a membrane F(0) domain - the membrane proton channel (subunits c, a, 8, e, f, g, k and j). These two domains are linked by a central stalk (subunits gamma, delta, and epsilon) rotating inside the F1 region and a stationary peripheral stalk (subunits F6, b, d, and OSCP). Interacts with DNAJC30; interaction is direct.</text>
</comment>
<comment type="subcellular location">
    <subcellularLocation>
        <location>Mitochondrion inner membrane</location>
        <topology>Multi-pass membrane protein</topology>
    </subcellularLocation>
</comment>
<comment type="similarity">
    <text evidence="3">Belongs to the ATPase A chain family.</text>
</comment>
<name>ATP6_MYXGL</name>